<evidence type="ECO:0000255" key="1">
    <source>
        <dbReference type="HAMAP-Rule" id="MF_00736"/>
    </source>
</evidence>
<evidence type="ECO:0000305" key="2"/>
<accession>Q0TMN4</accession>
<sequence length="141" mass="14900">MAKKVTGMIKLQLPAGKATPAPPVGPALGQHGVNIMGFCKEFNAKTADKAGLIIPVVITVYQDRSFSFILKTPPAAVLIKKELGLESGSGVPNRTKVGNITKEQIRKIAELKMPDLNAATIETAMSMIEGTARSMGVVVVE</sequence>
<keyword id="KW-0488">Methylation</keyword>
<keyword id="KW-0687">Ribonucleoprotein</keyword>
<keyword id="KW-0689">Ribosomal protein</keyword>
<keyword id="KW-0694">RNA-binding</keyword>
<keyword id="KW-0699">rRNA-binding</keyword>
<reference key="1">
    <citation type="journal article" date="2006" name="Genome Res.">
        <title>Skewed genomic variability in strains of the toxigenic bacterial pathogen, Clostridium perfringens.</title>
        <authorList>
            <person name="Myers G.S.A."/>
            <person name="Rasko D.A."/>
            <person name="Cheung J.K."/>
            <person name="Ravel J."/>
            <person name="Seshadri R."/>
            <person name="DeBoy R.T."/>
            <person name="Ren Q."/>
            <person name="Varga J."/>
            <person name="Awad M.M."/>
            <person name="Brinkac L.M."/>
            <person name="Daugherty S.C."/>
            <person name="Haft D.H."/>
            <person name="Dodson R.J."/>
            <person name="Madupu R."/>
            <person name="Nelson W.C."/>
            <person name="Rosovitz M.J."/>
            <person name="Sullivan S.A."/>
            <person name="Khouri H."/>
            <person name="Dimitrov G.I."/>
            <person name="Watkins K.L."/>
            <person name="Mulligan S."/>
            <person name="Benton J."/>
            <person name="Radune D."/>
            <person name="Fisher D.J."/>
            <person name="Atkins H.S."/>
            <person name="Hiscox T."/>
            <person name="Jost B.H."/>
            <person name="Billington S.J."/>
            <person name="Songer J.G."/>
            <person name="McClane B.A."/>
            <person name="Titball R.W."/>
            <person name="Rood J.I."/>
            <person name="Melville S.B."/>
            <person name="Paulsen I.T."/>
        </authorList>
    </citation>
    <scope>NUCLEOTIDE SEQUENCE [LARGE SCALE GENOMIC DNA]</scope>
    <source>
        <strain>ATCC 13124 / DSM 756 / JCM 1290 / NCIMB 6125 / NCTC 8237 / S 107 / Type A</strain>
    </source>
</reference>
<name>RL11_CLOP1</name>
<protein>
    <recommendedName>
        <fullName evidence="1">Large ribosomal subunit protein uL11</fullName>
    </recommendedName>
    <alternativeName>
        <fullName evidence="2">50S ribosomal protein L11</fullName>
    </alternativeName>
</protein>
<organism>
    <name type="scientific">Clostridium perfringens (strain ATCC 13124 / DSM 756 / JCM 1290 / NCIMB 6125 / NCTC 8237 / Type A)</name>
    <dbReference type="NCBI Taxonomy" id="195103"/>
    <lineage>
        <taxon>Bacteria</taxon>
        <taxon>Bacillati</taxon>
        <taxon>Bacillota</taxon>
        <taxon>Clostridia</taxon>
        <taxon>Eubacteriales</taxon>
        <taxon>Clostridiaceae</taxon>
        <taxon>Clostridium</taxon>
    </lineage>
</organism>
<dbReference type="EMBL" id="CP000246">
    <property type="protein sequence ID" value="ABG84764.1"/>
    <property type="molecule type" value="Genomic_DNA"/>
</dbReference>
<dbReference type="RefSeq" id="WP_003452181.1">
    <property type="nucleotide sequence ID" value="NC_008261.1"/>
</dbReference>
<dbReference type="SMR" id="Q0TMN4"/>
<dbReference type="STRING" id="195103.CPF_2726"/>
<dbReference type="PaxDb" id="195103-CPF_2726"/>
<dbReference type="GeneID" id="93000997"/>
<dbReference type="KEGG" id="cpf:CPF_2726"/>
<dbReference type="eggNOG" id="COG0080">
    <property type="taxonomic scope" value="Bacteria"/>
</dbReference>
<dbReference type="HOGENOM" id="CLU_074237_2_1_9"/>
<dbReference type="Proteomes" id="UP000001823">
    <property type="component" value="Chromosome"/>
</dbReference>
<dbReference type="GO" id="GO:0022625">
    <property type="term" value="C:cytosolic large ribosomal subunit"/>
    <property type="evidence" value="ECO:0007669"/>
    <property type="project" value="TreeGrafter"/>
</dbReference>
<dbReference type="GO" id="GO:0070180">
    <property type="term" value="F:large ribosomal subunit rRNA binding"/>
    <property type="evidence" value="ECO:0007669"/>
    <property type="project" value="UniProtKB-UniRule"/>
</dbReference>
<dbReference type="GO" id="GO:0003735">
    <property type="term" value="F:structural constituent of ribosome"/>
    <property type="evidence" value="ECO:0007669"/>
    <property type="project" value="InterPro"/>
</dbReference>
<dbReference type="GO" id="GO:0006412">
    <property type="term" value="P:translation"/>
    <property type="evidence" value="ECO:0007669"/>
    <property type="project" value="UniProtKB-UniRule"/>
</dbReference>
<dbReference type="CDD" id="cd00349">
    <property type="entry name" value="Ribosomal_L11"/>
    <property type="match status" value="1"/>
</dbReference>
<dbReference type="FunFam" id="1.10.10.250:FF:000001">
    <property type="entry name" value="50S ribosomal protein L11"/>
    <property type="match status" value="1"/>
</dbReference>
<dbReference type="FunFam" id="3.30.1550.10:FF:000001">
    <property type="entry name" value="50S ribosomal protein L11"/>
    <property type="match status" value="1"/>
</dbReference>
<dbReference type="Gene3D" id="1.10.10.250">
    <property type="entry name" value="Ribosomal protein L11, C-terminal domain"/>
    <property type="match status" value="1"/>
</dbReference>
<dbReference type="Gene3D" id="3.30.1550.10">
    <property type="entry name" value="Ribosomal protein L11/L12, N-terminal domain"/>
    <property type="match status" value="1"/>
</dbReference>
<dbReference type="HAMAP" id="MF_00736">
    <property type="entry name" value="Ribosomal_uL11"/>
    <property type="match status" value="1"/>
</dbReference>
<dbReference type="InterPro" id="IPR000911">
    <property type="entry name" value="Ribosomal_uL11"/>
</dbReference>
<dbReference type="InterPro" id="IPR006519">
    <property type="entry name" value="Ribosomal_uL11_bac-typ"/>
</dbReference>
<dbReference type="InterPro" id="IPR020783">
    <property type="entry name" value="Ribosomal_uL11_C"/>
</dbReference>
<dbReference type="InterPro" id="IPR036769">
    <property type="entry name" value="Ribosomal_uL11_C_sf"/>
</dbReference>
<dbReference type="InterPro" id="IPR020784">
    <property type="entry name" value="Ribosomal_uL11_N"/>
</dbReference>
<dbReference type="InterPro" id="IPR036796">
    <property type="entry name" value="Ribosomal_uL11_N_sf"/>
</dbReference>
<dbReference type="NCBIfam" id="TIGR01632">
    <property type="entry name" value="L11_bact"/>
    <property type="match status" value="1"/>
</dbReference>
<dbReference type="PANTHER" id="PTHR11661">
    <property type="entry name" value="60S RIBOSOMAL PROTEIN L12"/>
    <property type="match status" value="1"/>
</dbReference>
<dbReference type="PANTHER" id="PTHR11661:SF1">
    <property type="entry name" value="LARGE RIBOSOMAL SUBUNIT PROTEIN UL11M"/>
    <property type="match status" value="1"/>
</dbReference>
<dbReference type="Pfam" id="PF00298">
    <property type="entry name" value="Ribosomal_L11"/>
    <property type="match status" value="1"/>
</dbReference>
<dbReference type="Pfam" id="PF03946">
    <property type="entry name" value="Ribosomal_L11_N"/>
    <property type="match status" value="1"/>
</dbReference>
<dbReference type="SMART" id="SM00649">
    <property type="entry name" value="RL11"/>
    <property type="match status" value="1"/>
</dbReference>
<dbReference type="SUPFAM" id="SSF54747">
    <property type="entry name" value="Ribosomal L11/L12e N-terminal domain"/>
    <property type="match status" value="1"/>
</dbReference>
<dbReference type="SUPFAM" id="SSF46906">
    <property type="entry name" value="Ribosomal protein L11, C-terminal domain"/>
    <property type="match status" value="1"/>
</dbReference>
<proteinExistence type="inferred from homology"/>
<feature type="chain" id="PRO_0000258141" description="Large ribosomal subunit protein uL11">
    <location>
        <begin position="1"/>
        <end position="141"/>
    </location>
</feature>
<comment type="function">
    <text evidence="1">Forms part of the ribosomal stalk which helps the ribosome interact with GTP-bound translation factors.</text>
</comment>
<comment type="subunit">
    <text evidence="1">Part of the ribosomal stalk of the 50S ribosomal subunit. Interacts with L10 and the large rRNA to form the base of the stalk. L10 forms an elongated spine to which L12 dimers bind in a sequential fashion forming a multimeric L10(L12)X complex.</text>
</comment>
<comment type="PTM">
    <text evidence="1">One or more lysine residues are methylated.</text>
</comment>
<comment type="similarity">
    <text evidence="1">Belongs to the universal ribosomal protein uL11 family.</text>
</comment>
<gene>
    <name evidence="1" type="primary">rplK</name>
    <name type="ordered locus">CPF_2726</name>
</gene>